<protein>
    <recommendedName>
        <fullName evidence="1">Nucleoid occlusion protein</fullName>
        <shortName evidence="1">Noc</shortName>
    </recommendedName>
</protein>
<organism>
    <name type="scientific">Listeria innocua serovar 6a (strain ATCC BAA-680 / CLIP 11262)</name>
    <dbReference type="NCBI Taxonomy" id="272626"/>
    <lineage>
        <taxon>Bacteria</taxon>
        <taxon>Bacillati</taxon>
        <taxon>Bacillota</taxon>
        <taxon>Bacilli</taxon>
        <taxon>Bacillales</taxon>
        <taxon>Listeriaceae</taxon>
        <taxon>Listeria</taxon>
    </lineage>
</organism>
<evidence type="ECO:0000255" key="1">
    <source>
        <dbReference type="HAMAP-Rule" id="MF_02015"/>
    </source>
</evidence>
<gene>
    <name evidence="1" type="primary">noc</name>
    <name type="ordered locus">lin2926</name>
</gene>
<accession>Q926W4</accession>
<keyword id="KW-0131">Cell cycle</keyword>
<keyword id="KW-0132">Cell division</keyword>
<keyword id="KW-0963">Cytoplasm</keyword>
<keyword id="KW-0238">DNA-binding</keyword>
<keyword id="KW-0717">Septation</keyword>
<feature type="chain" id="PRO_0000346631" description="Nucleoid occlusion protein">
    <location>
        <begin position="1"/>
        <end position="284"/>
    </location>
</feature>
<feature type="DNA-binding region" description="H-T-H motif" evidence="1">
    <location>
        <begin position="143"/>
        <end position="162"/>
    </location>
</feature>
<dbReference type="EMBL" id="AL596174">
    <property type="protein sequence ID" value="CAC98151.1"/>
    <property type="molecule type" value="Genomic_DNA"/>
</dbReference>
<dbReference type="PIR" id="AG1797">
    <property type="entry name" value="AG1797"/>
</dbReference>
<dbReference type="RefSeq" id="WP_003772776.1">
    <property type="nucleotide sequence ID" value="NC_003212.1"/>
</dbReference>
<dbReference type="SMR" id="Q926W4"/>
<dbReference type="STRING" id="272626.gene:17567312"/>
<dbReference type="GeneID" id="93236202"/>
<dbReference type="KEGG" id="lin:lin2926"/>
<dbReference type="eggNOG" id="COG1475">
    <property type="taxonomic scope" value="Bacteria"/>
</dbReference>
<dbReference type="HOGENOM" id="CLU_023853_0_1_9"/>
<dbReference type="OrthoDB" id="9802051at2"/>
<dbReference type="Proteomes" id="UP000002513">
    <property type="component" value="Chromosome"/>
</dbReference>
<dbReference type="GO" id="GO:0005694">
    <property type="term" value="C:chromosome"/>
    <property type="evidence" value="ECO:0007669"/>
    <property type="project" value="TreeGrafter"/>
</dbReference>
<dbReference type="GO" id="GO:0005737">
    <property type="term" value="C:cytoplasm"/>
    <property type="evidence" value="ECO:0007669"/>
    <property type="project" value="UniProtKB-UniRule"/>
</dbReference>
<dbReference type="GO" id="GO:0009295">
    <property type="term" value="C:nucleoid"/>
    <property type="evidence" value="ECO:0007669"/>
    <property type="project" value="UniProtKB-SubCell"/>
</dbReference>
<dbReference type="GO" id="GO:0003677">
    <property type="term" value="F:DNA binding"/>
    <property type="evidence" value="ECO:0007669"/>
    <property type="project" value="UniProtKB-UniRule"/>
</dbReference>
<dbReference type="GO" id="GO:0007059">
    <property type="term" value="P:chromosome segregation"/>
    <property type="evidence" value="ECO:0007669"/>
    <property type="project" value="TreeGrafter"/>
</dbReference>
<dbReference type="GO" id="GO:0000917">
    <property type="term" value="P:division septum assembly"/>
    <property type="evidence" value="ECO:0007669"/>
    <property type="project" value="UniProtKB-KW"/>
</dbReference>
<dbReference type="GO" id="GO:0045881">
    <property type="term" value="P:positive regulation of sporulation resulting in formation of a cellular spore"/>
    <property type="evidence" value="ECO:0007669"/>
    <property type="project" value="TreeGrafter"/>
</dbReference>
<dbReference type="CDD" id="cd16393">
    <property type="entry name" value="SPO0J_N"/>
    <property type="match status" value="1"/>
</dbReference>
<dbReference type="FunFam" id="1.10.10.2830:FF:000001">
    <property type="entry name" value="Chromosome partitioning protein ParB"/>
    <property type="match status" value="1"/>
</dbReference>
<dbReference type="FunFam" id="3.90.1530.30:FF:000001">
    <property type="entry name" value="Chromosome partitioning protein ParB"/>
    <property type="match status" value="1"/>
</dbReference>
<dbReference type="Gene3D" id="1.10.10.2830">
    <property type="match status" value="1"/>
</dbReference>
<dbReference type="Gene3D" id="3.90.1530.30">
    <property type="match status" value="1"/>
</dbReference>
<dbReference type="HAMAP" id="MF_02015">
    <property type="entry name" value="ParB_Noc"/>
    <property type="match status" value="1"/>
</dbReference>
<dbReference type="InterPro" id="IPR050336">
    <property type="entry name" value="Chromosome_partition/occlusion"/>
</dbReference>
<dbReference type="InterPro" id="IPR041468">
    <property type="entry name" value="HTH_ParB/Spo0J"/>
</dbReference>
<dbReference type="InterPro" id="IPR023705">
    <property type="entry name" value="Nucleoid_occlusion_protein"/>
</dbReference>
<dbReference type="InterPro" id="IPR004437">
    <property type="entry name" value="ParB/RepB/Spo0J"/>
</dbReference>
<dbReference type="InterPro" id="IPR003115">
    <property type="entry name" value="ParB/Sulfiredoxin_dom"/>
</dbReference>
<dbReference type="InterPro" id="IPR036086">
    <property type="entry name" value="ParB/Sulfiredoxin_sf"/>
</dbReference>
<dbReference type="NCBIfam" id="TIGR04285">
    <property type="entry name" value="nucleoid_noc"/>
    <property type="match status" value="1"/>
</dbReference>
<dbReference type="NCBIfam" id="TIGR00180">
    <property type="entry name" value="parB_part"/>
    <property type="match status" value="1"/>
</dbReference>
<dbReference type="PANTHER" id="PTHR33375">
    <property type="entry name" value="CHROMOSOME-PARTITIONING PROTEIN PARB-RELATED"/>
    <property type="match status" value="1"/>
</dbReference>
<dbReference type="PANTHER" id="PTHR33375:SF8">
    <property type="entry name" value="NUCLEOID OCCLUSION PROTEIN"/>
    <property type="match status" value="1"/>
</dbReference>
<dbReference type="Pfam" id="PF17762">
    <property type="entry name" value="HTH_ParB"/>
    <property type="match status" value="1"/>
</dbReference>
<dbReference type="Pfam" id="PF02195">
    <property type="entry name" value="ParBc"/>
    <property type="match status" value="1"/>
</dbReference>
<dbReference type="SMART" id="SM00470">
    <property type="entry name" value="ParB"/>
    <property type="match status" value="1"/>
</dbReference>
<dbReference type="SUPFAM" id="SSF109709">
    <property type="entry name" value="KorB DNA-binding domain-like"/>
    <property type="match status" value="1"/>
</dbReference>
<dbReference type="SUPFAM" id="SSF110849">
    <property type="entry name" value="ParB/Sulfiredoxin"/>
    <property type="match status" value="1"/>
</dbReference>
<reference key="1">
    <citation type="journal article" date="2001" name="Science">
        <title>Comparative genomics of Listeria species.</title>
        <authorList>
            <person name="Glaser P."/>
            <person name="Frangeul L."/>
            <person name="Buchrieser C."/>
            <person name="Rusniok C."/>
            <person name="Amend A."/>
            <person name="Baquero F."/>
            <person name="Berche P."/>
            <person name="Bloecker H."/>
            <person name="Brandt P."/>
            <person name="Chakraborty T."/>
            <person name="Charbit A."/>
            <person name="Chetouani F."/>
            <person name="Couve E."/>
            <person name="de Daruvar A."/>
            <person name="Dehoux P."/>
            <person name="Domann E."/>
            <person name="Dominguez-Bernal G."/>
            <person name="Duchaud E."/>
            <person name="Durant L."/>
            <person name="Dussurget O."/>
            <person name="Entian K.-D."/>
            <person name="Fsihi H."/>
            <person name="Garcia-del Portillo F."/>
            <person name="Garrido P."/>
            <person name="Gautier L."/>
            <person name="Goebel W."/>
            <person name="Gomez-Lopez N."/>
            <person name="Hain T."/>
            <person name="Hauf J."/>
            <person name="Jackson D."/>
            <person name="Jones L.-M."/>
            <person name="Kaerst U."/>
            <person name="Kreft J."/>
            <person name="Kuhn M."/>
            <person name="Kunst F."/>
            <person name="Kurapkat G."/>
            <person name="Madueno E."/>
            <person name="Maitournam A."/>
            <person name="Mata Vicente J."/>
            <person name="Ng E."/>
            <person name="Nedjari H."/>
            <person name="Nordsiek G."/>
            <person name="Novella S."/>
            <person name="de Pablos B."/>
            <person name="Perez-Diaz J.-C."/>
            <person name="Purcell R."/>
            <person name="Remmel B."/>
            <person name="Rose M."/>
            <person name="Schlueter T."/>
            <person name="Simoes N."/>
            <person name="Tierrez A."/>
            <person name="Vazquez-Boland J.-A."/>
            <person name="Voss H."/>
            <person name="Wehland J."/>
            <person name="Cossart P."/>
        </authorList>
    </citation>
    <scope>NUCLEOTIDE SEQUENCE [LARGE SCALE GENOMIC DNA]</scope>
    <source>
        <strain>ATCC BAA-680 / CLIP 11262</strain>
    </source>
</reference>
<proteinExistence type="inferred from homology"/>
<name>NOC_LISIN</name>
<sequence length="284" mass="32849">MPFSRLFGKKDKNQMDDIVEEGVQRVLELPMDKIFPNQFQPRTVFDQDKIDELARTIRIHGVIQPIVVREMEPDYYEIIAGERRFRAVLSLKLEKIPAIIQNLDDEEVAAIALIENLQREELTPIEEAKAYRSLLDMQDVTQEALAQRVGKSQSAIANKMRLLKLPETVQEAVLNKQISERHARSLLALETEEQQVSLLQEIEENHWNVKQTEARIQEILGVKKSVATKKTKPKRQAISRDVRIAMNTIKQSVTMVKDNGMDLDFTEEETDDFYQITIQIPKKK</sequence>
<comment type="function">
    <text evidence="1">Effects nucleoid occlusion by binding relatively nonspecifically to DNA and preventing the assembly of the division machinery in the vicinity of the nucleoid, especially under conditions that disturb the cell cycle. It helps to coordinate cell division and chromosome segregation by preventing the formation of the Z ring through the nucleoid, which would cause chromosome breakage.</text>
</comment>
<comment type="subcellular location">
    <subcellularLocation>
        <location evidence="1">Cytoplasm</location>
        <location evidence="1">Nucleoid</location>
    </subcellularLocation>
</comment>
<comment type="similarity">
    <text evidence="1">Belongs to the ParB family.</text>
</comment>